<sequence>MAGKKKNDRHVEGDEVIRVPLPDRSKGQLFGVIEQALGAGWMDVRCEDGKVRRCRIPGKLKRRMWMRVGDVVIVQPWPVQSDERGDIVYRYTRTQVDWLLRKGKITQDFLSGGELLF</sequence>
<dbReference type="EMBL" id="AP006878">
    <property type="protein sequence ID" value="BAD84991.1"/>
    <property type="molecule type" value="Genomic_DNA"/>
</dbReference>
<dbReference type="RefSeq" id="WP_011249753.1">
    <property type="nucleotide sequence ID" value="NC_006624.1"/>
</dbReference>
<dbReference type="SMR" id="Q5JH78"/>
<dbReference type="FunCoup" id="Q5JH78">
    <property type="interactions" value="130"/>
</dbReference>
<dbReference type="STRING" id="69014.TK0802"/>
<dbReference type="EnsemblBacteria" id="BAD84991">
    <property type="protein sequence ID" value="BAD84991"/>
    <property type="gene ID" value="TK0802"/>
</dbReference>
<dbReference type="GeneID" id="78447318"/>
<dbReference type="KEGG" id="tko:TK0802"/>
<dbReference type="PATRIC" id="fig|69014.16.peg.782"/>
<dbReference type="eggNOG" id="arCOG01179">
    <property type="taxonomic scope" value="Archaea"/>
</dbReference>
<dbReference type="HOGENOM" id="CLU_109098_1_2_2"/>
<dbReference type="InParanoid" id="Q5JH78"/>
<dbReference type="OrthoDB" id="2586at2157"/>
<dbReference type="PhylomeDB" id="Q5JH78"/>
<dbReference type="Proteomes" id="UP000000536">
    <property type="component" value="Chromosome"/>
</dbReference>
<dbReference type="GO" id="GO:0005737">
    <property type="term" value="C:cytoplasm"/>
    <property type="evidence" value="ECO:0000318"/>
    <property type="project" value="GO_Central"/>
</dbReference>
<dbReference type="GO" id="GO:0003723">
    <property type="term" value="F:RNA binding"/>
    <property type="evidence" value="ECO:0007669"/>
    <property type="project" value="InterPro"/>
</dbReference>
<dbReference type="GO" id="GO:0003743">
    <property type="term" value="F:translation initiation factor activity"/>
    <property type="evidence" value="ECO:0000318"/>
    <property type="project" value="GO_Central"/>
</dbReference>
<dbReference type="GO" id="GO:0006413">
    <property type="term" value="P:translational initiation"/>
    <property type="evidence" value="ECO:0000318"/>
    <property type="project" value="GO_Central"/>
</dbReference>
<dbReference type="CDD" id="cd05793">
    <property type="entry name" value="S1_IF1A"/>
    <property type="match status" value="1"/>
</dbReference>
<dbReference type="Gene3D" id="2.40.50.140">
    <property type="entry name" value="Nucleic acid-binding proteins"/>
    <property type="match status" value="1"/>
</dbReference>
<dbReference type="HAMAP" id="MF_00216">
    <property type="entry name" value="aIF_1A"/>
    <property type="match status" value="1"/>
</dbReference>
<dbReference type="InterPro" id="IPR012340">
    <property type="entry name" value="NA-bd_OB-fold"/>
</dbReference>
<dbReference type="InterPro" id="IPR006196">
    <property type="entry name" value="RNA-binding_domain_S1_IF1"/>
</dbReference>
<dbReference type="InterPro" id="IPR001253">
    <property type="entry name" value="TIF_eIF-1A"/>
</dbReference>
<dbReference type="InterPro" id="IPR018104">
    <property type="entry name" value="TIF_eIF-1A_CS"/>
</dbReference>
<dbReference type="NCBIfam" id="TIGR00523">
    <property type="entry name" value="eIF-1A"/>
    <property type="match status" value="1"/>
</dbReference>
<dbReference type="NCBIfam" id="NF003084">
    <property type="entry name" value="PRK04012.1-3"/>
    <property type="match status" value="1"/>
</dbReference>
<dbReference type="NCBIfam" id="NF003085">
    <property type="entry name" value="PRK04012.1-5"/>
    <property type="match status" value="1"/>
</dbReference>
<dbReference type="NCBIfam" id="NF003086">
    <property type="entry name" value="PRK04012.2-2"/>
    <property type="match status" value="1"/>
</dbReference>
<dbReference type="PANTHER" id="PTHR21668">
    <property type="entry name" value="EIF-1A"/>
    <property type="match status" value="1"/>
</dbReference>
<dbReference type="Pfam" id="PF01176">
    <property type="entry name" value="eIF-1a"/>
    <property type="match status" value="1"/>
</dbReference>
<dbReference type="SMART" id="SM00652">
    <property type="entry name" value="eIF1a"/>
    <property type="match status" value="1"/>
</dbReference>
<dbReference type="SUPFAM" id="SSF50249">
    <property type="entry name" value="Nucleic acid-binding proteins"/>
    <property type="match status" value="1"/>
</dbReference>
<dbReference type="PROSITE" id="PS01262">
    <property type="entry name" value="IF1A"/>
    <property type="match status" value="1"/>
</dbReference>
<dbReference type="PROSITE" id="PS50832">
    <property type="entry name" value="S1_IF1_TYPE"/>
    <property type="match status" value="1"/>
</dbReference>
<name>IF1A_THEKO</name>
<comment type="function">
    <text evidence="1">Seems to be required for maximal rate of protein biosynthesis. Enhances ribosome dissociation into subunits and stabilizes the binding of the initiator Met-tRNA(I) to 40 S ribosomal subunits.</text>
</comment>
<comment type="similarity">
    <text evidence="1">Belongs to the eIF-1A family.</text>
</comment>
<evidence type="ECO:0000255" key="1">
    <source>
        <dbReference type="HAMAP-Rule" id="MF_00216"/>
    </source>
</evidence>
<keyword id="KW-0396">Initiation factor</keyword>
<keyword id="KW-0648">Protein biosynthesis</keyword>
<keyword id="KW-1185">Reference proteome</keyword>
<accession>Q5JH78</accession>
<feature type="chain" id="PRO_0000145132" description="Translation initiation factor 1A">
    <location>
        <begin position="1"/>
        <end position="117"/>
    </location>
</feature>
<feature type="domain" description="S1-like" evidence="1">
    <location>
        <begin position="17"/>
        <end position="92"/>
    </location>
</feature>
<reference key="1">
    <citation type="journal article" date="2005" name="Genome Res.">
        <title>Complete genome sequence of the hyperthermophilic archaeon Thermococcus kodakaraensis KOD1 and comparison with Pyrococcus genomes.</title>
        <authorList>
            <person name="Fukui T."/>
            <person name="Atomi H."/>
            <person name="Kanai T."/>
            <person name="Matsumi R."/>
            <person name="Fujiwara S."/>
            <person name="Imanaka T."/>
        </authorList>
    </citation>
    <scope>NUCLEOTIDE SEQUENCE [LARGE SCALE GENOMIC DNA]</scope>
    <source>
        <strain>ATCC BAA-918 / JCM 12380 / KOD1</strain>
    </source>
</reference>
<protein>
    <recommendedName>
        <fullName evidence="1">Translation initiation factor 1A</fullName>
        <shortName evidence="1">aIF-1A</shortName>
    </recommendedName>
</protein>
<organism>
    <name type="scientific">Thermococcus kodakarensis (strain ATCC BAA-918 / JCM 12380 / KOD1)</name>
    <name type="common">Pyrococcus kodakaraensis (strain KOD1)</name>
    <dbReference type="NCBI Taxonomy" id="69014"/>
    <lineage>
        <taxon>Archaea</taxon>
        <taxon>Methanobacteriati</taxon>
        <taxon>Methanobacteriota</taxon>
        <taxon>Thermococci</taxon>
        <taxon>Thermococcales</taxon>
        <taxon>Thermococcaceae</taxon>
        <taxon>Thermococcus</taxon>
    </lineage>
</organism>
<proteinExistence type="inferred from homology"/>
<gene>
    <name evidence="1" type="primary">eif1a</name>
    <name type="ordered locus">TK0802</name>
</gene>